<name>PURQ_PARMW</name>
<feature type="chain" id="PRO_0000100596" description="Phosphoribosylformylglycinamidine synthase subunit PurQ">
    <location>
        <begin position="1"/>
        <end position="217"/>
    </location>
</feature>
<feature type="domain" description="Glutamine amidotransferase type-1" evidence="1">
    <location>
        <begin position="2"/>
        <end position="217"/>
    </location>
</feature>
<feature type="active site" description="Nucleophile" evidence="1">
    <location>
        <position position="86"/>
    </location>
</feature>
<feature type="active site" evidence="1">
    <location>
        <position position="194"/>
    </location>
</feature>
<feature type="active site" evidence="1">
    <location>
        <position position="196"/>
    </location>
</feature>
<sequence length="217" mass="23090">MSIGVLVFPGSNCDRDVQWATEGCLGMPTRRIWHEETDLSGLDAVVLPGGFSYGDYLRCGAIARFAPALQALLGFAAQGGRVLGICNGFQVLTELGLLPGALTRNRDLHFICEDAPLQVVSSRTPWLEHYGTDKALTLPIAHGEGRYQCSDDTLKQLQDADAIALRYQANPNGSVADIAGITNDSGNVLGLMPHPERACDPATGGTDGRVLLQGLLS</sequence>
<comment type="function">
    <text evidence="1">Part of the phosphoribosylformylglycinamidine synthase complex involved in the purines biosynthetic pathway. Catalyzes the ATP-dependent conversion of formylglycinamide ribonucleotide (FGAR) and glutamine to yield formylglycinamidine ribonucleotide (FGAM) and glutamate. The FGAM synthase complex is composed of three subunits. PurQ produces an ammonia molecule by converting glutamine to glutamate. PurL transfers the ammonia molecule to FGAR to form FGAM in an ATP-dependent manner. PurS interacts with PurQ and PurL and is thought to assist in the transfer of the ammonia molecule from PurQ to PurL.</text>
</comment>
<comment type="catalytic activity">
    <reaction evidence="1">
        <text>N(2)-formyl-N(1)-(5-phospho-beta-D-ribosyl)glycinamide + L-glutamine + ATP + H2O = 2-formamido-N(1)-(5-O-phospho-beta-D-ribosyl)acetamidine + L-glutamate + ADP + phosphate + H(+)</text>
        <dbReference type="Rhea" id="RHEA:17129"/>
        <dbReference type="ChEBI" id="CHEBI:15377"/>
        <dbReference type="ChEBI" id="CHEBI:15378"/>
        <dbReference type="ChEBI" id="CHEBI:29985"/>
        <dbReference type="ChEBI" id="CHEBI:30616"/>
        <dbReference type="ChEBI" id="CHEBI:43474"/>
        <dbReference type="ChEBI" id="CHEBI:58359"/>
        <dbReference type="ChEBI" id="CHEBI:147286"/>
        <dbReference type="ChEBI" id="CHEBI:147287"/>
        <dbReference type="ChEBI" id="CHEBI:456216"/>
        <dbReference type="EC" id="6.3.5.3"/>
    </reaction>
</comment>
<comment type="catalytic activity">
    <reaction evidence="1">
        <text>L-glutamine + H2O = L-glutamate + NH4(+)</text>
        <dbReference type="Rhea" id="RHEA:15889"/>
        <dbReference type="ChEBI" id="CHEBI:15377"/>
        <dbReference type="ChEBI" id="CHEBI:28938"/>
        <dbReference type="ChEBI" id="CHEBI:29985"/>
        <dbReference type="ChEBI" id="CHEBI:58359"/>
        <dbReference type="EC" id="3.5.1.2"/>
    </reaction>
</comment>
<comment type="pathway">
    <text evidence="1">Purine metabolism; IMP biosynthesis via de novo pathway; 5-amino-1-(5-phospho-D-ribosyl)imidazole from N(2)-formyl-N(1)-(5-phospho-D-ribosyl)glycinamide: step 1/2.</text>
</comment>
<comment type="subunit">
    <text evidence="1">Part of the FGAM synthase complex composed of 1 PurL, 1 PurQ and 2 PurS subunits.</text>
</comment>
<comment type="subcellular location">
    <subcellularLocation>
        <location evidence="1">Cytoplasm</location>
    </subcellularLocation>
</comment>
<protein>
    <recommendedName>
        <fullName evidence="1">Phosphoribosylformylglycinamidine synthase subunit PurQ</fullName>
        <shortName evidence="1">FGAM synthase</shortName>
        <ecNumber evidence="1">6.3.5.3</ecNumber>
    </recommendedName>
    <alternativeName>
        <fullName evidence="1">Formylglycinamide ribonucleotide amidotransferase subunit I</fullName>
        <shortName evidence="1">FGAR amidotransferase I</shortName>
        <shortName evidence="1">FGAR-AT I</shortName>
    </alternativeName>
    <alternativeName>
        <fullName evidence="1">Glutaminase PurQ</fullName>
        <ecNumber evidence="1">3.5.1.2</ecNumber>
    </alternativeName>
    <alternativeName>
        <fullName evidence="1">Phosphoribosylformylglycinamidine synthase subunit I</fullName>
    </alternativeName>
</protein>
<reference key="1">
    <citation type="journal article" date="2003" name="Nature">
        <title>The genome of a motile marine Synechococcus.</title>
        <authorList>
            <person name="Palenik B."/>
            <person name="Brahamsha B."/>
            <person name="Larimer F.W."/>
            <person name="Land M.L."/>
            <person name="Hauser L."/>
            <person name="Chain P."/>
            <person name="Lamerdin J.E."/>
            <person name="Regala W."/>
            <person name="Allen E.E."/>
            <person name="McCarren J."/>
            <person name="Paulsen I.T."/>
            <person name="Dufresne A."/>
            <person name="Partensky F."/>
            <person name="Webb E.A."/>
            <person name="Waterbury J."/>
        </authorList>
    </citation>
    <scope>NUCLEOTIDE SEQUENCE [LARGE SCALE GENOMIC DNA]</scope>
    <source>
        <strain>WH8102</strain>
    </source>
</reference>
<organism>
    <name type="scientific">Parasynechococcus marenigrum (strain WH8102)</name>
    <dbReference type="NCBI Taxonomy" id="84588"/>
    <lineage>
        <taxon>Bacteria</taxon>
        <taxon>Bacillati</taxon>
        <taxon>Cyanobacteriota</taxon>
        <taxon>Cyanophyceae</taxon>
        <taxon>Synechococcales</taxon>
        <taxon>Prochlorococcaceae</taxon>
        <taxon>Parasynechococcus</taxon>
        <taxon>Parasynechococcus marenigrum</taxon>
    </lineage>
</organism>
<proteinExistence type="inferred from homology"/>
<evidence type="ECO:0000255" key="1">
    <source>
        <dbReference type="HAMAP-Rule" id="MF_00421"/>
    </source>
</evidence>
<gene>
    <name evidence="1" type="primary">purQ</name>
    <name type="ordered locus">SYNW0793</name>
</gene>
<keyword id="KW-0067">ATP-binding</keyword>
<keyword id="KW-0963">Cytoplasm</keyword>
<keyword id="KW-0315">Glutamine amidotransferase</keyword>
<keyword id="KW-0378">Hydrolase</keyword>
<keyword id="KW-0436">Ligase</keyword>
<keyword id="KW-0547">Nucleotide-binding</keyword>
<keyword id="KW-0658">Purine biosynthesis</keyword>
<dbReference type="EC" id="6.3.5.3" evidence="1"/>
<dbReference type="EC" id="3.5.1.2" evidence="1"/>
<dbReference type="EMBL" id="BX569691">
    <property type="protein sequence ID" value="CAE07308.1"/>
    <property type="molecule type" value="Genomic_DNA"/>
</dbReference>
<dbReference type="RefSeq" id="WP_011127658.1">
    <property type="nucleotide sequence ID" value="NC_005070.1"/>
</dbReference>
<dbReference type="SMR" id="Q7U831"/>
<dbReference type="STRING" id="84588.SYNW0793"/>
<dbReference type="KEGG" id="syw:SYNW0793"/>
<dbReference type="eggNOG" id="COG0047">
    <property type="taxonomic scope" value="Bacteria"/>
</dbReference>
<dbReference type="HOGENOM" id="CLU_001031_3_1_3"/>
<dbReference type="UniPathway" id="UPA00074">
    <property type="reaction ID" value="UER00128"/>
</dbReference>
<dbReference type="Proteomes" id="UP000001422">
    <property type="component" value="Chromosome"/>
</dbReference>
<dbReference type="GO" id="GO:0005737">
    <property type="term" value="C:cytoplasm"/>
    <property type="evidence" value="ECO:0007669"/>
    <property type="project" value="UniProtKB-SubCell"/>
</dbReference>
<dbReference type="GO" id="GO:0005524">
    <property type="term" value="F:ATP binding"/>
    <property type="evidence" value="ECO:0007669"/>
    <property type="project" value="UniProtKB-KW"/>
</dbReference>
<dbReference type="GO" id="GO:0004359">
    <property type="term" value="F:glutaminase activity"/>
    <property type="evidence" value="ECO:0007669"/>
    <property type="project" value="UniProtKB-EC"/>
</dbReference>
<dbReference type="GO" id="GO:0004642">
    <property type="term" value="F:phosphoribosylformylglycinamidine synthase activity"/>
    <property type="evidence" value="ECO:0007669"/>
    <property type="project" value="UniProtKB-UniRule"/>
</dbReference>
<dbReference type="GO" id="GO:0006189">
    <property type="term" value="P:'de novo' IMP biosynthetic process"/>
    <property type="evidence" value="ECO:0007669"/>
    <property type="project" value="UniProtKB-UniRule"/>
</dbReference>
<dbReference type="CDD" id="cd01740">
    <property type="entry name" value="GATase1_FGAR_AT"/>
    <property type="match status" value="1"/>
</dbReference>
<dbReference type="Gene3D" id="3.40.50.880">
    <property type="match status" value="1"/>
</dbReference>
<dbReference type="HAMAP" id="MF_00421">
    <property type="entry name" value="PurQ"/>
    <property type="match status" value="1"/>
</dbReference>
<dbReference type="InterPro" id="IPR029062">
    <property type="entry name" value="Class_I_gatase-like"/>
</dbReference>
<dbReference type="InterPro" id="IPR010075">
    <property type="entry name" value="PRibForGlyAmidine_synth_PurQ"/>
</dbReference>
<dbReference type="NCBIfam" id="TIGR01737">
    <property type="entry name" value="FGAM_synth_I"/>
    <property type="match status" value="1"/>
</dbReference>
<dbReference type="NCBIfam" id="NF002957">
    <property type="entry name" value="PRK03619.1"/>
    <property type="match status" value="1"/>
</dbReference>
<dbReference type="PANTHER" id="PTHR47552">
    <property type="entry name" value="PHOSPHORIBOSYLFORMYLGLYCINAMIDINE SYNTHASE SUBUNIT PURQ"/>
    <property type="match status" value="1"/>
</dbReference>
<dbReference type="PANTHER" id="PTHR47552:SF1">
    <property type="entry name" value="PHOSPHORIBOSYLFORMYLGLYCINAMIDINE SYNTHASE SUBUNIT PURQ"/>
    <property type="match status" value="1"/>
</dbReference>
<dbReference type="Pfam" id="PF13507">
    <property type="entry name" value="GATase_5"/>
    <property type="match status" value="1"/>
</dbReference>
<dbReference type="PIRSF" id="PIRSF001586">
    <property type="entry name" value="FGAM_synth_I"/>
    <property type="match status" value="1"/>
</dbReference>
<dbReference type="SMART" id="SM01211">
    <property type="entry name" value="GATase_5"/>
    <property type="match status" value="1"/>
</dbReference>
<dbReference type="SUPFAM" id="SSF52317">
    <property type="entry name" value="Class I glutamine amidotransferase-like"/>
    <property type="match status" value="1"/>
</dbReference>
<dbReference type="PROSITE" id="PS51273">
    <property type="entry name" value="GATASE_TYPE_1"/>
    <property type="match status" value="1"/>
</dbReference>
<accession>Q7U831</accession>